<protein>
    <recommendedName>
        <fullName evidence="1">3-isopropylmalate dehydratase small subunit</fullName>
        <ecNumber evidence="1">4.2.1.33</ecNumber>
    </recommendedName>
    <alternativeName>
        <fullName evidence="1">Alpha-IPM isomerase</fullName>
        <shortName evidence="1">IPMI</shortName>
    </alternativeName>
    <alternativeName>
        <fullName evidence="1">Isopropylmalate isomerase</fullName>
    </alternativeName>
</protein>
<gene>
    <name evidence="1" type="primary">leuD</name>
    <name type="ordered locus">VV1_0657</name>
</gene>
<name>LEUD_VIBVU</name>
<evidence type="ECO:0000255" key="1">
    <source>
        <dbReference type="HAMAP-Rule" id="MF_01031"/>
    </source>
</evidence>
<feature type="chain" id="PRO_0000141908" description="3-isopropylmalate dehydratase small subunit">
    <location>
        <begin position="1"/>
        <end position="200"/>
    </location>
</feature>
<dbReference type="EC" id="4.2.1.33" evidence="1"/>
<dbReference type="EMBL" id="AE016795">
    <property type="protein sequence ID" value="AAO09169.1"/>
    <property type="molecule type" value="Genomic_DNA"/>
</dbReference>
<dbReference type="RefSeq" id="WP_011078736.1">
    <property type="nucleotide sequence ID" value="NC_004459.3"/>
</dbReference>
<dbReference type="SMR" id="Q8DED8"/>
<dbReference type="KEGG" id="vvu:VV1_0657"/>
<dbReference type="HOGENOM" id="CLU_081378_0_3_6"/>
<dbReference type="UniPathway" id="UPA00048">
    <property type="reaction ID" value="UER00071"/>
</dbReference>
<dbReference type="Proteomes" id="UP000002275">
    <property type="component" value="Chromosome 1"/>
</dbReference>
<dbReference type="GO" id="GO:0009316">
    <property type="term" value="C:3-isopropylmalate dehydratase complex"/>
    <property type="evidence" value="ECO:0007669"/>
    <property type="project" value="InterPro"/>
</dbReference>
<dbReference type="GO" id="GO:0003861">
    <property type="term" value="F:3-isopropylmalate dehydratase activity"/>
    <property type="evidence" value="ECO:0007669"/>
    <property type="project" value="UniProtKB-UniRule"/>
</dbReference>
<dbReference type="GO" id="GO:0009098">
    <property type="term" value="P:L-leucine biosynthetic process"/>
    <property type="evidence" value="ECO:0007669"/>
    <property type="project" value="UniProtKB-UniRule"/>
</dbReference>
<dbReference type="CDD" id="cd01577">
    <property type="entry name" value="IPMI_Swivel"/>
    <property type="match status" value="1"/>
</dbReference>
<dbReference type="FunFam" id="3.20.19.10:FF:000003">
    <property type="entry name" value="3-isopropylmalate dehydratase small subunit"/>
    <property type="match status" value="1"/>
</dbReference>
<dbReference type="Gene3D" id="3.20.19.10">
    <property type="entry name" value="Aconitase, domain 4"/>
    <property type="match status" value="1"/>
</dbReference>
<dbReference type="HAMAP" id="MF_01031">
    <property type="entry name" value="LeuD_type1"/>
    <property type="match status" value="1"/>
</dbReference>
<dbReference type="InterPro" id="IPR004431">
    <property type="entry name" value="3-IsopropMal_deHydase_ssu"/>
</dbReference>
<dbReference type="InterPro" id="IPR015928">
    <property type="entry name" value="Aconitase/3IPM_dehydase_swvl"/>
</dbReference>
<dbReference type="InterPro" id="IPR000573">
    <property type="entry name" value="AconitaseA/IPMdHydase_ssu_swvl"/>
</dbReference>
<dbReference type="InterPro" id="IPR033940">
    <property type="entry name" value="IPMI_Swivel"/>
</dbReference>
<dbReference type="InterPro" id="IPR050075">
    <property type="entry name" value="LeuD"/>
</dbReference>
<dbReference type="NCBIfam" id="TIGR00171">
    <property type="entry name" value="leuD"/>
    <property type="match status" value="1"/>
</dbReference>
<dbReference type="NCBIfam" id="NF002458">
    <property type="entry name" value="PRK01641.1"/>
    <property type="match status" value="1"/>
</dbReference>
<dbReference type="PANTHER" id="PTHR43345:SF5">
    <property type="entry name" value="3-ISOPROPYLMALATE DEHYDRATASE SMALL SUBUNIT"/>
    <property type="match status" value="1"/>
</dbReference>
<dbReference type="PANTHER" id="PTHR43345">
    <property type="entry name" value="3-ISOPROPYLMALATE DEHYDRATASE SMALL SUBUNIT 2-RELATED-RELATED"/>
    <property type="match status" value="1"/>
</dbReference>
<dbReference type="Pfam" id="PF00694">
    <property type="entry name" value="Aconitase_C"/>
    <property type="match status" value="1"/>
</dbReference>
<dbReference type="SUPFAM" id="SSF52016">
    <property type="entry name" value="LeuD/IlvD-like"/>
    <property type="match status" value="1"/>
</dbReference>
<reference key="1">
    <citation type="submission" date="2002-12" db="EMBL/GenBank/DDBJ databases">
        <title>Complete genome sequence of Vibrio vulnificus CMCP6.</title>
        <authorList>
            <person name="Rhee J.H."/>
            <person name="Kim S.Y."/>
            <person name="Chung S.S."/>
            <person name="Kim J.J."/>
            <person name="Moon Y.H."/>
            <person name="Jeong H."/>
            <person name="Choy H.E."/>
        </authorList>
    </citation>
    <scope>NUCLEOTIDE SEQUENCE [LARGE SCALE GENOMIC DNA]</scope>
    <source>
        <strain>CMCP6</strain>
    </source>
</reference>
<organism>
    <name type="scientific">Vibrio vulnificus (strain CMCP6)</name>
    <dbReference type="NCBI Taxonomy" id="216895"/>
    <lineage>
        <taxon>Bacteria</taxon>
        <taxon>Pseudomonadati</taxon>
        <taxon>Pseudomonadota</taxon>
        <taxon>Gammaproteobacteria</taxon>
        <taxon>Vibrionales</taxon>
        <taxon>Vibrionaceae</taxon>
        <taxon>Vibrio</taxon>
    </lineage>
</organism>
<comment type="function">
    <text evidence="1">Catalyzes the isomerization between 2-isopropylmalate and 3-isopropylmalate, via the formation of 2-isopropylmaleate.</text>
</comment>
<comment type="catalytic activity">
    <reaction evidence="1">
        <text>(2R,3S)-3-isopropylmalate = (2S)-2-isopropylmalate</text>
        <dbReference type="Rhea" id="RHEA:32287"/>
        <dbReference type="ChEBI" id="CHEBI:1178"/>
        <dbReference type="ChEBI" id="CHEBI:35121"/>
        <dbReference type="EC" id="4.2.1.33"/>
    </reaction>
</comment>
<comment type="pathway">
    <text evidence="1">Amino-acid biosynthesis; L-leucine biosynthesis; L-leucine from 3-methyl-2-oxobutanoate: step 2/4.</text>
</comment>
<comment type="subunit">
    <text evidence="1">Heterodimer of LeuC and LeuD.</text>
</comment>
<comment type="similarity">
    <text evidence="1">Belongs to the LeuD family. LeuD type 1 subfamily.</text>
</comment>
<proteinExistence type="inferred from homology"/>
<sequence>MQGFKQHTGLVVPLDAANVDTDAIIPKQFLQKVSRLGFGKHLFHDWRFLDDAGEQPNPEFVMNHARYQGASILLARENFGCGSSREHAPWALADYGIRAMIAPSFADIFYSNSINNQMVPVRLTEQEVDELFQYVQATEGAQIEVDLEALKVRANDKEYSFGIDDFRRHCLLNGLDHIGLTLQHEDKIAAFEADIPAFLR</sequence>
<keyword id="KW-0028">Amino-acid biosynthesis</keyword>
<keyword id="KW-0100">Branched-chain amino acid biosynthesis</keyword>
<keyword id="KW-0432">Leucine biosynthesis</keyword>
<keyword id="KW-0456">Lyase</keyword>
<accession>Q8DED8</accession>